<proteinExistence type="inferred from homology"/>
<sequence>MLIKLLTKVFGSRNDRTLRRMRKAVSLINAMEPEMEKLSDDELKAKTNEFRARIEKGESVESLIPEAFAVVREASKRVFGMRHFDVQLLGGMVLNDRCIAEMRTGEGKTLTATLPAYLNALSGKGVHVVTVNDYLAQRDAENNRPLFEFLGMSVGINLPGMPAPAKREAYAADITYGTNNEYGFDYLRDNMAFSPEERVQRKLHYALVDEVDSILIDEARTPLIISGPAEDSSEMYKKVNKIIPHLIRQEKEDSDTFQGEGHFSVDEKARQVNLTERGLVLIEELLVQEGIMDEGESLYSPGNIMLMHHVTAALRAHALFTRDVDYIVKDGEVIIVDEHTGRTMQGRRWSDGLHQAVEAKEGVEIQNENQTLASITFQNYFRLYEKLAGMTGTADTEAFEFSSIYKLDTVVVPTNRPMIRKDLPDLVYMTEAEKIQAIIEDIKERTANGQPVLVGTISIEKSEVVSRELTKAGIKHNVLNAKFHANEAGIVAQAGYPAAVTIATNMAGRGTDIMLGGSWQAEVAALEAPTEEQIAQIKADWQVRHDAVLAAGGLHIIGTERHESRRIDNQLRGRSGRQGDPGSSRFYLSMEDALMRIFASDRVSGMMRKLGMKPGEAIEHPWVTKAIANAQRKVESRNFDIRKQLLEYDDVANDQRRAIYTQRNELLDVSDVSDTINSIREDVFKATIDAYIPPQSLEEMWDIPGLQERLKNDFDLELPIAEWLDKEPELHEETLRERILAQSIEVYQRKEEVVGAEMMRHFEKGVMLQTLDSLWKEHLAAMDYLRQGIHLRGYAQKDPKQEYKRESFAMFAAMLESLKYEVISTLSKVQVRMPEEVEAMEMQRREEAERLAQMQQLSHQDDDTAVAADLAAQTGERKIGRNDPCPCGSGKKYKQCHGRLS</sequence>
<accession>B4TXI5</accession>
<gene>
    <name evidence="1" type="primary">secA</name>
    <name type="ordered locus">SeSA_A0152</name>
</gene>
<reference key="1">
    <citation type="journal article" date="2011" name="J. Bacteriol.">
        <title>Comparative genomics of 28 Salmonella enterica isolates: evidence for CRISPR-mediated adaptive sublineage evolution.</title>
        <authorList>
            <person name="Fricke W.F."/>
            <person name="Mammel M.K."/>
            <person name="McDermott P.F."/>
            <person name="Tartera C."/>
            <person name="White D.G."/>
            <person name="Leclerc J.E."/>
            <person name="Ravel J."/>
            <person name="Cebula T.A."/>
        </authorList>
    </citation>
    <scope>NUCLEOTIDE SEQUENCE [LARGE SCALE GENOMIC DNA]</scope>
    <source>
        <strain>CVM19633</strain>
    </source>
</reference>
<dbReference type="EC" id="7.4.2.8" evidence="1"/>
<dbReference type="EMBL" id="CP001127">
    <property type="protein sequence ID" value="ACF91944.1"/>
    <property type="molecule type" value="Genomic_DNA"/>
</dbReference>
<dbReference type="RefSeq" id="WP_000905755.1">
    <property type="nucleotide sequence ID" value="NC_011094.1"/>
</dbReference>
<dbReference type="SMR" id="B4TXI5"/>
<dbReference type="KEGG" id="sew:SeSA_A0152"/>
<dbReference type="HOGENOM" id="CLU_005314_3_0_6"/>
<dbReference type="Proteomes" id="UP000001865">
    <property type="component" value="Chromosome"/>
</dbReference>
<dbReference type="GO" id="GO:0031522">
    <property type="term" value="C:cell envelope Sec protein transport complex"/>
    <property type="evidence" value="ECO:0007669"/>
    <property type="project" value="TreeGrafter"/>
</dbReference>
<dbReference type="GO" id="GO:0005829">
    <property type="term" value="C:cytosol"/>
    <property type="evidence" value="ECO:0007669"/>
    <property type="project" value="TreeGrafter"/>
</dbReference>
<dbReference type="GO" id="GO:0005886">
    <property type="term" value="C:plasma membrane"/>
    <property type="evidence" value="ECO:0007669"/>
    <property type="project" value="UniProtKB-SubCell"/>
</dbReference>
<dbReference type="GO" id="GO:0005524">
    <property type="term" value="F:ATP binding"/>
    <property type="evidence" value="ECO:0007669"/>
    <property type="project" value="UniProtKB-UniRule"/>
</dbReference>
<dbReference type="GO" id="GO:0046872">
    <property type="term" value="F:metal ion binding"/>
    <property type="evidence" value="ECO:0007669"/>
    <property type="project" value="UniProtKB-KW"/>
</dbReference>
<dbReference type="GO" id="GO:0008564">
    <property type="term" value="F:protein-exporting ATPase activity"/>
    <property type="evidence" value="ECO:0007669"/>
    <property type="project" value="UniProtKB-EC"/>
</dbReference>
<dbReference type="GO" id="GO:0065002">
    <property type="term" value="P:intracellular protein transmembrane transport"/>
    <property type="evidence" value="ECO:0007669"/>
    <property type="project" value="UniProtKB-UniRule"/>
</dbReference>
<dbReference type="GO" id="GO:0017038">
    <property type="term" value="P:protein import"/>
    <property type="evidence" value="ECO:0007669"/>
    <property type="project" value="InterPro"/>
</dbReference>
<dbReference type="GO" id="GO:0006605">
    <property type="term" value="P:protein targeting"/>
    <property type="evidence" value="ECO:0007669"/>
    <property type="project" value="UniProtKB-UniRule"/>
</dbReference>
<dbReference type="GO" id="GO:0043952">
    <property type="term" value="P:protein transport by the Sec complex"/>
    <property type="evidence" value="ECO:0007669"/>
    <property type="project" value="TreeGrafter"/>
</dbReference>
<dbReference type="CDD" id="cd17928">
    <property type="entry name" value="DEXDc_SecA"/>
    <property type="match status" value="1"/>
</dbReference>
<dbReference type="CDD" id="cd18803">
    <property type="entry name" value="SF2_C_secA"/>
    <property type="match status" value="1"/>
</dbReference>
<dbReference type="FunFam" id="1.10.3060.10:FF:000001">
    <property type="entry name" value="Preprotein translocase subunit SecA"/>
    <property type="match status" value="1"/>
</dbReference>
<dbReference type="FunFam" id="3.40.50.300:FF:000081">
    <property type="entry name" value="Preprotein translocase subunit SecA"/>
    <property type="match status" value="1"/>
</dbReference>
<dbReference type="FunFam" id="3.40.50.300:FF:000113">
    <property type="entry name" value="Preprotein translocase subunit SecA"/>
    <property type="match status" value="1"/>
</dbReference>
<dbReference type="FunFam" id="3.90.1440.10:FF:000001">
    <property type="entry name" value="Preprotein translocase subunit SecA"/>
    <property type="match status" value="1"/>
</dbReference>
<dbReference type="Gene3D" id="1.10.3060.10">
    <property type="entry name" value="Helical scaffold and wing domains of SecA"/>
    <property type="match status" value="1"/>
</dbReference>
<dbReference type="Gene3D" id="3.40.50.300">
    <property type="entry name" value="P-loop containing nucleotide triphosphate hydrolases"/>
    <property type="match status" value="2"/>
</dbReference>
<dbReference type="Gene3D" id="3.90.1440.10">
    <property type="entry name" value="SecA, preprotein cross-linking domain"/>
    <property type="match status" value="1"/>
</dbReference>
<dbReference type="HAMAP" id="MF_01382">
    <property type="entry name" value="SecA"/>
    <property type="match status" value="1"/>
</dbReference>
<dbReference type="InterPro" id="IPR014001">
    <property type="entry name" value="Helicase_ATP-bd"/>
</dbReference>
<dbReference type="InterPro" id="IPR027417">
    <property type="entry name" value="P-loop_NTPase"/>
</dbReference>
<dbReference type="InterPro" id="IPR004027">
    <property type="entry name" value="SEC_C_motif"/>
</dbReference>
<dbReference type="InterPro" id="IPR000185">
    <property type="entry name" value="SecA"/>
</dbReference>
<dbReference type="InterPro" id="IPR020937">
    <property type="entry name" value="SecA_CS"/>
</dbReference>
<dbReference type="InterPro" id="IPR011115">
    <property type="entry name" value="SecA_DEAD"/>
</dbReference>
<dbReference type="InterPro" id="IPR014018">
    <property type="entry name" value="SecA_motor_DEAD"/>
</dbReference>
<dbReference type="InterPro" id="IPR011130">
    <property type="entry name" value="SecA_preprotein_X-link_dom"/>
</dbReference>
<dbReference type="InterPro" id="IPR044722">
    <property type="entry name" value="SecA_SF2_C"/>
</dbReference>
<dbReference type="InterPro" id="IPR011116">
    <property type="entry name" value="SecA_Wing/Scaffold"/>
</dbReference>
<dbReference type="InterPro" id="IPR036266">
    <property type="entry name" value="SecA_Wing/Scaffold_sf"/>
</dbReference>
<dbReference type="InterPro" id="IPR036670">
    <property type="entry name" value="SecA_X-link_sf"/>
</dbReference>
<dbReference type="NCBIfam" id="NF009538">
    <property type="entry name" value="PRK12904.1"/>
    <property type="match status" value="1"/>
</dbReference>
<dbReference type="NCBIfam" id="TIGR00963">
    <property type="entry name" value="secA"/>
    <property type="match status" value="1"/>
</dbReference>
<dbReference type="PANTHER" id="PTHR30612:SF0">
    <property type="entry name" value="CHLOROPLAST PROTEIN-TRANSPORTING ATPASE"/>
    <property type="match status" value="1"/>
</dbReference>
<dbReference type="PANTHER" id="PTHR30612">
    <property type="entry name" value="SECA INNER MEMBRANE COMPONENT OF SEC PROTEIN SECRETION SYSTEM"/>
    <property type="match status" value="1"/>
</dbReference>
<dbReference type="Pfam" id="PF21090">
    <property type="entry name" value="P-loop_SecA"/>
    <property type="match status" value="1"/>
</dbReference>
<dbReference type="Pfam" id="PF02810">
    <property type="entry name" value="SEC-C"/>
    <property type="match status" value="1"/>
</dbReference>
<dbReference type="Pfam" id="PF07517">
    <property type="entry name" value="SecA_DEAD"/>
    <property type="match status" value="1"/>
</dbReference>
<dbReference type="Pfam" id="PF01043">
    <property type="entry name" value="SecA_PP_bind"/>
    <property type="match status" value="1"/>
</dbReference>
<dbReference type="Pfam" id="PF07516">
    <property type="entry name" value="SecA_SW"/>
    <property type="match status" value="1"/>
</dbReference>
<dbReference type="PRINTS" id="PR00906">
    <property type="entry name" value="SECA"/>
</dbReference>
<dbReference type="SMART" id="SM00957">
    <property type="entry name" value="SecA_DEAD"/>
    <property type="match status" value="1"/>
</dbReference>
<dbReference type="SMART" id="SM00958">
    <property type="entry name" value="SecA_PP_bind"/>
    <property type="match status" value="1"/>
</dbReference>
<dbReference type="SUPFAM" id="SSF81886">
    <property type="entry name" value="Helical scaffold and wing domains of SecA"/>
    <property type="match status" value="1"/>
</dbReference>
<dbReference type="SUPFAM" id="SSF52540">
    <property type="entry name" value="P-loop containing nucleoside triphosphate hydrolases"/>
    <property type="match status" value="2"/>
</dbReference>
<dbReference type="SUPFAM" id="SSF81767">
    <property type="entry name" value="Pre-protein crosslinking domain of SecA"/>
    <property type="match status" value="1"/>
</dbReference>
<dbReference type="PROSITE" id="PS01312">
    <property type="entry name" value="SECA"/>
    <property type="match status" value="1"/>
</dbReference>
<dbReference type="PROSITE" id="PS51196">
    <property type="entry name" value="SECA_MOTOR_DEAD"/>
    <property type="match status" value="1"/>
</dbReference>
<protein>
    <recommendedName>
        <fullName evidence="1">Protein translocase subunit SecA</fullName>
        <ecNumber evidence="1">7.4.2.8</ecNumber>
    </recommendedName>
</protein>
<keyword id="KW-0067">ATP-binding</keyword>
<keyword id="KW-0997">Cell inner membrane</keyword>
<keyword id="KW-1003">Cell membrane</keyword>
<keyword id="KW-0963">Cytoplasm</keyword>
<keyword id="KW-0472">Membrane</keyword>
<keyword id="KW-0479">Metal-binding</keyword>
<keyword id="KW-0547">Nucleotide-binding</keyword>
<keyword id="KW-0653">Protein transport</keyword>
<keyword id="KW-1278">Translocase</keyword>
<keyword id="KW-0811">Translocation</keyword>
<keyword id="KW-0813">Transport</keyword>
<keyword id="KW-0862">Zinc</keyword>
<name>SECA_SALSV</name>
<comment type="function">
    <text evidence="1">Part of the Sec protein translocase complex. Interacts with the SecYEG preprotein conducting channel. Has a central role in coupling the hydrolysis of ATP to the transfer of proteins into and across the cell membrane, serving both as a receptor for the preprotein-SecB complex and as an ATP-driven molecular motor driving the stepwise translocation of polypeptide chains across the membrane.</text>
</comment>
<comment type="catalytic activity">
    <reaction evidence="1">
        <text>ATP + H2O + cellular proteinSide 1 = ADP + phosphate + cellular proteinSide 2.</text>
        <dbReference type="EC" id="7.4.2.8"/>
    </reaction>
</comment>
<comment type="cofactor">
    <cofactor evidence="1">
        <name>Zn(2+)</name>
        <dbReference type="ChEBI" id="CHEBI:29105"/>
    </cofactor>
    <text evidence="1">May bind 1 zinc ion per subunit.</text>
</comment>
<comment type="subunit">
    <text evidence="1">Monomer and homodimer. Part of the essential Sec protein translocation apparatus which comprises SecA, SecYEG and auxiliary proteins SecDF-YajC and YidC.</text>
</comment>
<comment type="subcellular location">
    <subcellularLocation>
        <location evidence="1">Cell inner membrane</location>
        <topology evidence="1">Peripheral membrane protein</topology>
        <orientation evidence="1">Cytoplasmic side</orientation>
    </subcellularLocation>
    <subcellularLocation>
        <location evidence="1">Cytoplasm</location>
    </subcellularLocation>
    <text evidence="1">Distribution is 50-50.</text>
</comment>
<comment type="induction">
    <text evidence="1">Repressed under conditions of excess protein secretion capacity and derepressed when protein secretion becomes limiting. This is regulated by SecM.</text>
</comment>
<comment type="similarity">
    <text evidence="1">Belongs to the SecA family.</text>
</comment>
<organism>
    <name type="scientific">Salmonella schwarzengrund (strain CVM19633)</name>
    <dbReference type="NCBI Taxonomy" id="439843"/>
    <lineage>
        <taxon>Bacteria</taxon>
        <taxon>Pseudomonadati</taxon>
        <taxon>Pseudomonadota</taxon>
        <taxon>Gammaproteobacteria</taxon>
        <taxon>Enterobacterales</taxon>
        <taxon>Enterobacteriaceae</taxon>
        <taxon>Salmonella</taxon>
    </lineage>
</organism>
<feature type="chain" id="PRO_1000145060" description="Protein translocase subunit SecA">
    <location>
        <begin position="1"/>
        <end position="901"/>
    </location>
</feature>
<feature type="binding site" evidence="1">
    <location>
        <position position="87"/>
    </location>
    <ligand>
        <name>ATP</name>
        <dbReference type="ChEBI" id="CHEBI:30616"/>
    </ligand>
</feature>
<feature type="binding site" evidence="1">
    <location>
        <begin position="105"/>
        <end position="109"/>
    </location>
    <ligand>
        <name>ATP</name>
        <dbReference type="ChEBI" id="CHEBI:30616"/>
    </ligand>
</feature>
<feature type="binding site" evidence="1">
    <location>
        <position position="512"/>
    </location>
    <ligand>
        <name>ATP</name>
        <dbReference type="ChEBI" id="CHEBI:30616"/>
    </ligand>
</feature>
<feature type="binding site" evidence="1">
    <location>
        <position position="885"/>
    </location>
    <ligand>
        <name>Zn(2+)</name>
        <dbReference type="ChEBI" id="CHEBI:29105"/>
    </ligand>
</feature>
<feature type="binding site" evidence="1">
    <location>
        <position position="887"/>
    </location>
    <ligand>
        <name>Zn(2+)</name>
        <dbReference type="ChEBI" id="CHEBI:29105"/>
    </ligand>
</feature>
<feature type="binding site" evidence="1">
    <location>
        <position position="896"/>
    </location>
    <ligand>
        <name>Zn(2+)</name>
        <dbReference type="ChEBI" id="CHEBI:29105"/>
    </ligand>
</feature>
<feature type="binding site" evidence="1">
    <location>
        <position position="897"/>
    </location>
    <ligand>
        <name>Zn(2+)</name>
        <dbReference type="ChEBI" id="CHEBI:29105"/>
    </ligand>
</feature>
<evidence type="ECO:0000255" key="1">
    <source>
        <dbReference type="HAMAP-Rule" id="MF_01382"/>
    </source>
</evidence>